<protein>
    <recommendedName>
        <fullName evidence="1">Apolipoprotein N-acyltransferase</fullName>
        <shortName evidence="1">ALP N-acyltransferase</shortName>
        <ecNumber evidence="1">2.3.1.269</ecNumber>
    </recommendedName>
</protein>
<gene>
    <name evidence="1" type="primary">lnt</name>
    <name type="synonym">actA</name>
    <name type="ordered locus">Smed_0044</name>
</gene>
<name>LNT_SINMW</name>
<dbReference type="EC" id="2.3.1.269" evidence="1"/>
<dbReference type="EMBL" id="L13845">
    <property type="protein sequence ID" value="AAB81867.1"/>
    <property type="status" value="ALT_INIT"/>
    <property type="molecule type" value="Genomic_DNA"/>
</dbReference>
<dbReference type="EMBL" id="CP000738">
    <property type="protein sequence ID" value="ABR58904.1"/>
    <property type="status" value="ALT_INIT"/>
    <property type="molecule type" value="Genomic_DNA"/>
</dbReference>
<dbReference type="RefSeq" id="WP_024325025.1">
    <property type="nucleotide sequence ID" value="NC_009636.1"/>
</dbReference>
<dbReference type="RefSeq" id="YP_001325739.1">
    <property type="nucleotide sequence ID" value="NC_009636.1"/>
</dbReference>
<dbReference type="SMR" id="Q52910"/>
<dbReference type="STRING" id="366394.Smed_0044"/>
<dbReference type="GeneID" id="61611171"/>
<dbReference type="KEGG" id="smd:Smed_0044"/>
<dbReference type="PATRIC" id="fig|366394.8.peg.3098"/>
<dbReference type="eggNOG" id="COG0815">
    <property type="taxonomic scope" value="Bacteria"/>
</dbReference>
<dbReference type="HOGENOM" id="CLU_019563_3_1_5"/>
<dbReference type="OrthoDB" id="9804277at2"/>
<dbReference type="UniPathway" id="UPA00666"/>
<dbReference type="Proteomes" id="UP000001108">
    <property type="component" value="Chromosome"/>
</dbReference>
<dbReference type="GO" id="GO:0005886">
    <property type="term" value="C:plasma membrane"/>
    <property type="evidence" value="ECO:0007669"/>
    <property type="project" value="UniProtKB-SubCell"/>
</dbReference>
<dbReference type="GO" id="GO:0016410">
    <property type="term" value="F:N-acyltransferase activity"/>
    <property type="evidence" value="ECO:0007669"/>
    <property type="project" value="UniProtKB-UniRule"/>
</dbReference>
<dbReference type="GO" id="GO:0042158">
    <property type="term" value="P:lipoprotein biosynthetic process"/>
    <property type="evidence" value="ECO:0007669"/>
    <property type="project" value="UniProtKB-UniRule"/>
</dbReference>
<dbReference type="CDD" id="cd07571">
    <property type="entry name" value="ALP_N-acyl_transferase"/>
    <property type="match status" value="1"/>
</dbReference>
<dbReference type="Gene3D" id="3.60.110.10">
    <property type="entry name" value="Carbon-nitrogen hydrolase"/>
    <property type="match status" value="1"/>
</dbReference>
<dbReference type="HAMAP" id="MF_01148">
    <property type="entry name" value="Lnt"/>
    <property type="match status" value="1"/>
</dbReference>
<dbReference type="InterPro" id="IPR004563">
    <property type="entry name" value="Apolipo_AcylTrfase"/>
</dbReference>
<dbReference type="InterPro" id="IPR003010">
    <property type="entry name" value="C-N_Hydrolase"/>
</dbReference>
<dbReference type="InterPro" id="IPR036526">
    <property type="entry name" value="C-N_Hydrolase_sf"/>
</dbReference>
<dbReference type="InterPro" id="IPR045378">
    <property type="entry name" value="LNT_N"/>
</dbReference>
<dbReference type="NCBIfam" id="TIGR00546">
    <property type="entry name" value="lnt"/>
    <property type="match status" value="1"/>
</dbReference>
<dbReference type="PANTHER" id="PTHR38686">
    <property type="entry name" value="APOLIPOPROTEIN N-ACYLTRANSFERASE"/>
    <property type="match status" value="1"/>
</dbReference>
<dbReference type="PANTHER" id="PTHR38686:SF1">
    <property type="entry name" value="APOLIPOPROTEIN N-ACYLTRANSFERASE"/>
    <property type="match status" value="1"/>
</dbReference>
<dbReference type="Pfam" id="PF00795">
    <property type="entry name" value="CN_hydrolase"/>
    <property type="match status" value="1"/>
</dbReference>
<dbReference type="Pfam" id="PF20154">
    <property type="entry name" value="LNT_N"/>
    <property type="match status" value="1"/>
</dbReference>
<dbReference type="SUPFAM" id="SSF56317">
    <property type="entry name" value="Carbon-nitrogen hydrolase"/>
    <property type="match status" value="1"/>
</dbReference>
<dbReference type="PROSITE" id="PS50263">
    <property type="entry name" value="CN_HYDROLASE"/>
    <property type="match status" value="1"/>
</dbReference>
<organism>
    <name type="scientific">Sinorhizobium medicae (strain WSM419)</name>
    <name type="common">Ensifer medicae</name>
    <dbReference type="NCBI Taxonomy" id="366394"/>
    <lineage>
        <taxon>Bacteria</taxon>
        <taxon>Pseudomonadati</taxon>
        <taxon>Pseudomonadota</taxon>
        <taxon>Alphaproteobacteria</taxon>
        <taxon>Hyphomicrobiales</taxon>
        <taxon>Rhizobiaceae</taxon>
        <taxon>Sinorhizobium/Ensifer group</taxon>
        <taxon>Sinorhizobium</taxon>
    </lineage>
</organism>
<comment type="function">
    <text evidence="1">Catalyzes the phospholipid dependent N-acylation of the N-terminal cysteine of apolipoprotein, the last step in lipoprotein maturation.</text>
</comment>
<comment type="catalytic activity">
    <reaction evidence="1">
        <text>N-terminal S-1,2-diacyl-sn-glyceryl-L-cysteinyl-[lipoprotein] + a glycerophospholipid = N-acyl-S-1,2-diacyl-sn-glyceryl-L-cysteinyl-[lipoprotein] + a 2-acyl-sn-glycero-3-phospholipid + H(+)</text>
        <dbReference type="Rhea" id="RHEA:48228"/>
        <dbReference type="Rhea" id="RHEA-COMP:14681"/>
        <dbReference type="Rhea" id="RHEA-COMP:14684"/>
        <dbReference type="ChEBI" id="CHEBI:15378"/>
        <dbReference type="ChEBI" id="CHEBI:136912"/>
        <dbReference type="ChEBI" id="CHEBI:140656"/>
        <dbReference type="ChEBI" id="CHEBI:140657"/>
        <dbReference type="ChEBI" id="CHEBI:140660"/>
        <dbReference type="EC" id="2.3.1.269"/>
    </reaction>
</comment>
<comment type="pathway">
    <text evidence="1">Protein modification; lipoprotein biosynthesis (N-acyl transfer).</text>
</comment>
<comment type="subcellular location">
    <subcellularLocation>
        <location evidence="1">Cell inner membrane</location>
        <topology evidence="1">Multi-pass membrane protein</topology>
    </subcellularLocation>
</comment>
<comment type="similarity">
    <text evidence="1 2">Belongs to the CN hydrolase family. Apolipoprotein N-acyltransferase subfamily.</text>
</comment>
<comment type="sequence caution" evidence="2">
    <conflict type="erroneous initiation">
        <sequence resource="EMBL-CDS" id="AAB81867"/>
    </conflict>
</comment>
<comment type="sequence caution" evidence="2">
    <conflict type="erroneous initiation">
        <sequence resource="EMBL-CDS" id="ABR58904"/>
    </conflict>
</comment>
<accession>Q52910</accession>
<accession>A6U5H4</accession>
<sequence>MERLAGRIILLSGVSRAFVGFLAGLLAVLAQPPFGIFAAAFVSFPVLVWLIDGVAPDPSDGAFRRLRQPAAIGWSFGFGYFLGGLWWLGNALLVEADAFAWAIPLAVVGLPAVLGVFYALAVVIARCLWSDGWGRIAALALGFGIAEWLRGFVFTGFPWNAIGYAAMPMPLMMQSASVVNLSTINMLAVFVFAAPALIWTGKGARTGLAIAVALFTAHIAFGFYRLAQPAPPSAAPQMAVRVVQPVIDQAKKLDDRERASIFEDHLSLTAAPVQGGGKRPDIVVWPETSIPFILTDNPDALARIAEVLKDGQILVAGAVRAEDAGAGLPSRYYNSVYVIDDRGQIIGAADKVHLVPFGEYLPYEDLLTSWGLSSIAASMPGGFSAARMRPVLTLPGGRRLYPMICYEAIFADEVDANARLADVLLNVTNDAWFGDTPGPRQHFHQAQLRAVETGIPMIRAANTGISAVVDARGVLVLVLGYNYRGVLDTILPGKLPTLTDVPTRSRIFWLSMAILSIVASFSRFGFNIRKN</sequence>
<feature type="chain" id="PRO_0000178090" description="Apolipoprotein N-acyltransferase">
    <location>
        <begin position="1"/>
        <end position="531"/>
    </location>
</feature>
<feature type="transmembrane region" description="Helical" evidence="1">
    <location>
        <begin position="8"/>
        <end position="28"/>
    </location>
</feature>
<feature type="transmembrane region" description="Helical" evidence="1">
    <location>
        <begin position="34"/>
        <end position="54"/>
    </location>
</feature>
<feature type="transmembrane region" description="Helical" evidence="1">
    <location>
        <begin position="69"/>
        <end position="89"/>
    </location>
</feature>
<feature type="transmembrane region" description="Helical" evidence="1">
    <location>
        <begin position="105"/>
        <end position="125"/>
    </location>
</feature>
<feature type="transmembrane region" description="Helical" evidence="1">
    <location>
        <begin position="136"/>
        <end position="156"/>
    </location>
</feature>
<feature type="transmembrane region" description="Helical" evidence="1">
    <location>
        <begin position="178"/>
        <end position="198"/>
    </location>
</feature>
<feature type="transmembrane region" description="Helical" evidence="1">
    <location>
        <begin position="207"/>
        <end position="227"/>
    </location>
</feature>
<feature type="transmembrane region" description="Helical" evidence="1">
    <location>
        <begin position="507"/>
        <end position="527"/>
    </location>
</feature>
<feature type="domain" description="CN hydrolase" evidence="1">
    <location>
        <begin position="243"/>
        <end position="493"/>
    </location>
</feature>
<feature type="active site" description="Proton acceptor" evidence="1">
    <location>
        <position position="287"/>
    </location>
</feature>
<feature type="active site" evidence="1">
    <location>
        <position position="351"/>
    </location>
</feature>
<feature type="active site" description="Nucleophile" evidence="1">
    <location>
        <position position="405"/>
    </location>
</feature>
<feature type="sequence conflict" description="In Ref. 1; AAB81867." evidence="2" ref="1">
    <location>
        <begin position="477"/>
        <end position="478"/>
    </location>
</feature>
<evidence type="ECO:0000255" key="1">
    <source>
        <dbReference type="HAMAP-Rule" id="MF_01148"/>
    </source>
</evidence>
<evidence type="ECO:0000305" key="2"/>
<reference key="1">
    <citation type="journal article" date="1996" name="Microbiology">
        <title>An essential role for actA in acid tolerance of Rhizobium meliloti.</title>
        <authorList>
            <person name="Tiwari R.P."/>
            <person name="Reeve W.G."/>
            <person name="Dilworth M.J."/>
            <person name="Glenn A.R."/>
        </authorList>
    </citation>
    <scope>NUCLEOTIDE SEQUENCE [GENOMIC DNA]</scope>
</reference>
<reference key="2">
    <citation type="submission" date="2007-06" db="EMBL/GenBank/DDBJ databases">
        <title>Complete sequence of Sinorhizobium medicae WSM419 chromosome.</title>
        <authorList>
            <consortium name="US DOE Joint Genome Institute"/>
            <person name="Copeland A."/>
            <person name="Lucas S."/>
            <person name="Lapidus A."/>
            <person name="Barry K."/>
            <person name="Glavina del Rio T."/>
            <person name="Dalin E."/>
            <person name="Tice H."/>
            <person name="Pitluck S."/>
            <person name="Chain P."/>
            <person name="Malfatti S."/>
            <person name="Shin M."/>
            <person name="Vergez L."/>
            <person name="Schmutz J."/>
            <person name="Larimer F."/>
            <person name="Land M."/>
            <person name="Hauser L."/>
            <person name="Kyrpides N."/>
            <person name="Mikhailova N."/>
            <person name="Reeve W.G."/>
            <person name="Richardson P."/>
        </authorList>
    </citation>
    <scope>NUCLEOTIDE SEQUENCE [LARGE SCALE GENOMIC DNA]</scope>
    <source>
        <strain>WSM419</strain>
    </source>
</reference>
<keyword id="KW-0012">Acyltransferase</keyword>
<keyword id="KW-0997">Cell inner membrane</keyword>
<keyword id="KW-1003">Cell membrane</keyword>
<keyword id="KW-0472">Membrane</keyword>
<keyword id="KW-0808">Transferase</keyword>
<keyword id="KW-0812">Transmembrane</keyword>
<keyword id="KW-1133">Transmembrane helix</keyword>
<proteinExistence type="inferred from homology"/>